<feature type="chain" id="PRO_1000076808" description="Probable endonuclease 4">
    <location>
        <begin position="1"/>
        <end position="285"/>
    </location>
</feature>
<feature type="binding site" evidence="1">
    <location>
        <position position="69"/>
    </location>
    <ligand>
        <name>Zn(2+)</name>
        <dbReference type="ChEBI" id="CHEBI:29105"/>
        <label>1</label>
    </ligand>
</feature>
<feature type="binding site" evidence="1">
    <location>
        <position position="109"/>
    </location>
    <ligand>
        <name>Zn(2+)</name>
        <dbReference type="ChEBI" id="CHEBI:29105"/>
        <label>1</label>
    </ligand>
</feature>
<feature type="binding site" evidence="1">
    <location>
        <position position="145"/>
    </location>
    <ligand>
        <name>Zn(2+)</name>
        <dbReference type="ChEBI" id="CHEBI:29105"/>
        <label>1</label>
    </ligand>
</feature>
<feature type="binding site" evidence="1">
    <location>
        <position position="145"/>
    </location>
    <ligand>
        <name>Zn(2+)</name>
        <dbReference type="ChEBI" id="CHEBI:29105"/>
        <label>2</label>
    </ligand>
</feature>
<feature type="binding site" evidence="1">
    <location>
        <position position="179"/>
    </location>
    <ligand>
        <name>Zn(2+)</name>
        <dbReference type="ChEBI" id="CHEBI:29105"/>
        <label>2</label>
    </ligand>
</feature>
<feature type="binding site" evidence="1">
    <location>
        <position position="182"/>
    </location>
    <ligand>
        <name>Zn(2+)</name>
        <dbReference type="ChEBI" id="CHEBI:29105"/>
        <label>3</label>
    </ligand>
</feature>
<feature type="binding site" evidence="1">
    <location>
        <position position="216"/>
    </location>
    <ligand>
        <name>Zn(2+)</name>
        <dbReference type="ChEBI" id="CHEBI:29105"/>
        <label>2</label>
    </ligand>
</feature>
<feature type="binding site" evidence="1">
    <location>
        <position position="229"/>
    </location>
    <ligand>
        <name>Zn(2+)</name>
        <dbReference type="ChEBI" id="CHEBI:29105"/>
        <label>3</label>
    </ligand>
</feature>
<feature type="binding site" evidence="1">
    <location>
        <position position="231"/>
    </location>
    <ligand>
        <name>Zn(2+)</name>
        <dbReference type="ChEBI" id="CHEBI:29105"/>
        <label>3</label>
    </ligand>
</feature>
<feature type="binding site" evidence="1">
    <location>
        <position position="261"/>
    </location>
    <ligand>
        <name>Zn(2+)</name>
        <dbReference type="ChEBI" id="CHEBI:29105"/>
        <label>2</label>
    </ligand>
</feature>
<accession>A9N6I5</accession>
<comment type="function">
    <text evidence="1">Endonuclease IV plays a role in DNA repair. It cleaves phosphodiester bonds at apurinic or apyrimidinic (AP) sites, generating a 3'-hydroxyl group and a 5'-terminal sugar phosphate.</text>
</comment>
<comment type="catalytic activity">
    <reaction evidence="1">
        <text>Endonucleolytic cleavage to 5'-phosphooligonucleotide end-products.</text>
        <dbReference type="EC" id="3.1.21.2"/>
    </reaction>
</comment>
<comment type="cofactor">
    <cofactor evidence="1">
        <name>Zn(2+)</name>
        <dbReference type="ChEBI" id="CHEBI:29105"/>
    </cofactor>
    <text evidence="1">Binds 3 Zn(2+) ions.</text>
</comment>
<comment type="similarity">
    <text evidence="1">Belongs to the AP endonuclease 2 family.</text>
</comment>
<gene>
    <name evidence="1" type="primary">nfo</name>
    <name type="ordered locus">SPAB_00806</name>
</gene>
<organism>
    <name type="scientific">Salmonella paratyphi B (strain ATCC BAA-1250 / SPB7)</name>
    <dbReference type="NCBI Taxonomy" id="1016998"/>
    <lineage>
        <taxon>Bacteria</taxon>
        <taxon>Pseudomonadati</taxon>
        <taxon>Pseudomonadota</taxon>
        <taxon>Gammaproteobacteria</taxon>
        <taxon>Enterobacterales</taxon>
        <taxon>Enterobacteriaceae</taxon>
        <taxon>Salmonella</taxon>
    </lineage>
</organism>
<reference key="1">
    <citation type="submission" date="2007-11" db="EMBL/GenBank/DDBJ databases">
        <authorList>
            <consortium name="The Salmonella enterica serovar Paratyphi B Genome Sequencing Project"/>
            <person name="McClelland M."/>
            <person name="Sanderson E.K."/>
            <person name="Porwollik S."/>
            <person name="Spieth J."/>
            <person name="Clifton W.S."/>
            <person name="Fulton R."/>
            <person name="Cordes M."/>
            <person name="Wollam A."/>
            <person name="Shah N."/>
            <person name="Pepin K."/>
            <person name="Bhonagiri V."/>
            <person name="Nash W."/>
            <person name="Johnson M."/>
            <person name="Thiruvilangam P."/>
            <person name="Wilson R."/>
        </authorList>
    </citation>
    <scope>NUCLEOTIDE SEQUENCE [LARGE SCALE GENOMIC DNA]</scope>
    <source>
        <strain>ATCC BAA-1250 / SPB7</strain>
    </source>
</reference>
<name>END4_SALPB</name>
<sequence length="285" mass="31196">MKYIGAHVSAAGGLANAPARAAEIGATAFALFTKNQRQWRAAPLTPQVIDDFKIACEKYHFSAAQILPHDSYLINLGHPVSEALEKSRDAFLDEMQRCEQLGLTLLNFHPGSHLMQIAQEDCLARIAESINIALAQTEGVTAVIENTAGQGSNLGFEFEQLAAIIDGVEDKSRVGVCIDTCHAFAAGYDLRTPEACEKTFAEFGKIVGFQYLRGMHLNDAKSAFGSRVDRHHSLGEGNIGHDAFRWIMQDGRFDGIPLILETINPDIWAEEIAWLKAQQIAEAMA</sequence>
<keyword id="KW-0227">DNA damage</keyword>
<keyword id="KW-0234">DNA repair</keyword>
<keyword id="KW-0255">Endonuclease</keyword>
<keyword id="KW-0378">Hydrolase</keyword>
<keyword id="KW-0479">Metal-binding</keyword>
<keyword id="KW-0540">Nuclease</keyword>
<keyword id="KW-0862">Zinc</keyword>
<protein>
    <recommendedName>
        <fullName evidence="1">Probable endonuclease 4</fullName>
        <ecNumber evidence="1">3.1.21.2</ecNumber>
    </recommendedName>
    <alternativeName>
        <fullName evidence="1">Endodeoxyribonuclease IV</fullName>
    </alternativeName>
    <alternativeName>
        <fullName evidence="1">Endonuclease IV</fullName>
    </alternativeName>
</protein>
<proteinExistence type="inferred from homology"/>
<evidence type="ECO:0000255" key="1">
    <source>
        <dbReference type="HAMAP-Rule" id="MF_00152"/>
    </source>
</evidence>
<dbReference type="EC" id="3.1.21.2" evidence="1"/>
<dbReference type="EMBL" id="CP000886">
    <property type="protein sequence ID" value="ABX66230.1"/>
    <property type="molecule type" value="Genomic_DNA"/>
</dbReference>
<dbReference type="RefSeq" id="WP_000873909.1">
    <property type="nucleotide sequence ID" value="NC_010102.1"/>
</dbReference>
<dbReference type="SMR" id="A9N6I5"/>
<dbReference type="KEGG" id="spq:SPAB_00806"/>
<dbReference type="PATRIC" id="fig|1016998.12.peg.754"/>
<dbReference type="HOGENOM" id="CLU_025885_0_4_6"/>
<dbReference type="BioCyc" id="SENT1016998:SPAB_RS03330-MONOMER"/>
<dbReference type="Proteomes" id="UP000008556">
    <property type="component" value="Chromosome"/>
</dbReference>
<dbReference type="GO" id="GO:0008833">
    <property type="term" value="F:deoxyribonuclease IV (phage-T4-induced) activity"/>
    <property type="evidence" value="ECO:0007669"/>
    <property type="project" value="UniProtKB-UniRule"/>
</dbReference>
<dbReference type="GO" id="GO:0003677">
    <property type="term" value="F:DNA binding"/>
    <property type="evidence" value="ECO:0007669"/>
    <property type="project" value="InterPro"/>
</dbReference>
<dbReference type="GO" id="GO:0003906">
    <property type="term" value="F:DNA-(apurinic or apyrimidinic site) endonuclease activity"/>
    <property type="evidence" value="ECO:0007669"/>
    <property type="project" value="TreeGrafter"/>
</dbReference>
<dbReference type="GO" id="GO:0008081">
    <property type="term" value="F:phosphoric diester hydrolase activity"/>
    <property type="evidence" value="ECO:0007669"/>
    <property type="project" value="TreeGrafter"/>
</dbReference>
<dbReference type="GO" id="GO:0008270">
    <property type="term" value="F:zinc ion binding"/>
    <property type="evidence" value="ECO:0007669"/>
    <property type="project" value="UniProtKB-UniRule"/>
</dbReference>
<dbReference type="GO" id="GO:0006284">
    <property type="term" value="P:base-excision repair"/>
    <property type="evidence" value="ECO:0007669"/>
    <property type="project" value="TreeGrafter"/>
</dbReference>
<dbReference type="CDD" id="cd00019">
    <property type="entry name" value="AP2Ec"/>
    <property type="match status" value="1"/>
</dbReference>
<dbReference type="FunFam" id="3.20.20.150:FF:000001">
    <property type="entry name" value="Probable endonuclease 4"/>
    <property type="match status" value="1"/>
</dbReference>
<dbReference type="Gene3D" id="3.20.20.150">
    <property type="entry name" value="Divalent-metal-dependent TIM barrel enzymes"/>
    <property type="match status" value="1"/>
</dbReference>
<dbReference type="HAMAP" id="MF_00152">
    <property type="entry name" value="Nfo"/>
    <property type="match status" value="1"/>
</dbReference>
<dbReference type="InterPro" id="IPR001719">
    <property type="entry name" value="AP_endonuc_2"/>
</dbReference>
<dbReference type="InterPro" id="IPR018246">
    <property type="entry name" value="AP_endonuc_F2_Zn_BS"/>
</dbReference>
<dbReference type="InterPro" id="IPR036237">
    <property type="entry name" value="Xyl_isomerase-like_sf"/>
</dbReference>
<dbReference type="InterPro" id="IPR013022">
    <property type="entry name" value="Xyl_isomerase-like_TIM-brl"/>
</dbReference>
<dbReference type="NCBIfam" id="TIGR00587">
    <property type="entry name" value="nfo"/>
    <property type="match status" value="1"/>
</dbReference>
<dbReference type="NCBIfam" id="NF002199">
    <property type="entry name" value="PRK01060.1-4"/>
    <property type="match status" value="1"/>
</dbReference>
<dbReference type="PANTHER" id="PTHR21445:SF0">
    <property type="entry name" value="APURINIC-APYRIMIDINIC ENDONUCLEASE"/>
    <property type="match status" value="1"/>
</dbReference>
<dbReference type="PANTHER" id="PTHR21445">
    <property type="entry name" value="ENDONUCLEASE IV ENDODEOXYRIBONUCLEASE IV"/>
    <property type="match status" value="1"/>
</dbReference>
<dbReference type="Pfam" id="PF01261">
    <property type="entry name" value="AP_endonuc_2"/>
    <property type="match status" value="1"/>
</dbReference>
<dbReference type="SMART" id="SM00518">
    <property type="entry name" value="AP2Ec"/>
    <property type="match status" value="1"/>
</dbReference>
<dbReference type="SUPFAM" id="SSF51658">
    <property type="entry name" value="Xylose isomerase-like"/>
    <property type="match status" value="1"/>
</dbReference>
<dbReference type="PROSITE" id="PS00729">
    <property type="entry name" value="AP_NUCLEASE_F2_1"/>
    <property type="match status" value="1"/>
</dbReference>
<dbReference type="PROSITE" id="PS00730">
    <property type="entry name" value="AP_NUCLEASE_F2_2"/>
    <property type="match status" value="1"/>
</dbReference>
<dbReference type="PROSITE" id="PS00731">
    <property type="entry name" value="AP_NUCLEASE_F2_3"/>
    <property type="match status" value="1"/>
</dbReference>
<dbReference type="PROSITE" id="PS51432">
    <property type="entry name" value="AP_NUCLEASE_F2_4"/>
    <property type="match status" value="1"/>
</dbReference>